<sequence>MTLPDFRLIRLLPLASLVLTACTLPGHKGPGKSPDSPQWRQHQQEVRHLNQYQTRGAFAYISDDQKVYARFFWQQTGQDRYRLLLTNPLGSTELELNAQPGNVQLVDNKGQRYTADDAEEMIGKLTGMPIPLNSLRQWILGLPGDATDYKLDDQYRLSEVNYRQDGKNWKVVYGGYDSKTQPAMPANMELSDGSQRIKLKMDNWIVK</sequence>
<name>LOLB_SALA4</name>
<reference key="1">
    <citation type="journal article" date="2011" name="J. Bacteriol.">
        <title>Comparative genomics of 28 Salmonella enterica isolates: evidence for CRISPR-mediated adaptive sublineage evolution.</title>
        <authorList>
            <person name="Fricke W.F."/>
            <person name="Mammel M.K."/>
            <person name="McDermott P.F."/>
            <person name="Tartera C."/>
            <person name="White D.G."/>
            <person name="Leclerc J.E."/>
            <person name="Ravel J."/>
            <person name="Cebula T.A."/>
        </authorList>
    </citation>
    <scope>NUCLEOTIDE SEQUENCE [LARGE SCALE GENOMIC DNA]</scope>
    <source>
        <strain>SL483</strain>
    </source>
</reference>
<proteinExistence type="inferred from homology"/>
<comment type="function">
    <text evidence="1">Plays a critical role in the incorporation of lipoproteins in the outer membrane after they are released by the LolA protein.</text>
</comment>
<comment type="subunit">
    <text evidence="1">Monomer.</text>
</comment>
<comment type="subcellular location">
    <subcellularLocation>
        <location evidence="1">Cell outer membrane</location>
        <topology evidence="1">Lipid-anchor</topology>
    </subcellularLocation>
</comment>
<comment type="similarity">
    <text evidence="1">Belongs to the LolB family.</text>
</comment>
<dbReference type="EMBL" id="CP001138">
    <property type="protein sequence ID" value="ACH49149.1"/>
    <property type="molecule type" value="Genomic_DNA"/>
</dbReference>
<dbReference type="RefSeq" id="WP_000174484.1">
    <property type="nucleotide sequence ID" value="NC_011149.1"/>
</dbReference>
<dbReference type="SMR" id="B5F4H3"/>
<dbReference type="KEGG" id="sea:SeAg_B1360"/>
<dbReference type="HOGENOM" id="CLU_092816_1_1_6"/>
<dbReference type="Proteomes" id="UP000008819">
    <property type="component" value="Chromosome"/>
</dbReference>
<dbReference type="GO" id="GO:0009279">
    <property type="term" value="C:cell outer membrane"/>
    <property type="evidence" value="ECO:0007669"/>
    <property type="project" value="UniProtKB-SubCell"/>
</dbReference>
<dbReference type="GO" id="GO:0044874">
    <property type="term" value="P:lipoprotein localization to outer membrane"/>
    <property type="evidence" value="ECO:0007669"/>
    <property type="project" value="UniProtKB-UniRule"/>
</dbReference>
<dbReference type="GO" id="GO:0015031">
    <property type="term" value="P:protein transport"/>
    <property type="evidence" value="ECO:0007669"/>
    <property type="project" value="UniProtKB-KW"/>
</dbReference>
<dbReference type="CDD" id="cd16326">
    <property type="entry name" value="LolB"/>
    <property type="match status" value="1"/>
</dbReference>
<dbReference type="FunFam" id="2.50.20.10:FF:000002">
    <property type="entry name" value="Outer-membrane lipoprotein LolB"/>
    <property type="match status" value="1"/>
</dbReference>
<dbReference type="Gene3D" id="2.50.20.10">
    <property type="entry name" value="Lipoprotein localisation LolA/LolB/LppX"/>
    <property type="match status" value="1"/>
</dbReference>
<dbReference type="HAMAP" id="MF_00233">
    <property type="entry name" value="LolB"/>
    <property type="match status" value="1"/>
</dbReference>
<dbReference type="InterPro" id="IPR029046">
    <property type="entry name" value="LolA/LolB/LppX"/>
</dbReference>
<dbReference type="InterPro" id="IPR004565">
    <property type="entry name" value="OM_lipoprot_LolB"/>
</dbReference>
<dbReference type="NCBIfam" id="TIGR00548">
    <property type="entry name" value="lolB"/>
    <property type="match status" value="1"/>
</dbReference>
<dbReference type="Pfam" id="PF03550">
    <property type="entry name" value="LolB"/>
    <property type="match status" value="1"/>
</dbReference>
<dbReference type="SUPFAM" id="SSF89392">
    <property type="entry name" value="Prokaryotic lipoproteins and lipoprotein localization factors"/>
    <property type="match status" value="1"/>
</dbReference>
<dbReference type="PROSITE" id="PS51257">
    <property type="entry name" value="PROKAR_LIPOPROTEIN"/>
    <property type="match status" value="1"/>
</dbReference>
<organism>
    <name type="scientific">Salmonella agona (strain SL483)</name>
    <dbReference type="NCBI Taxonomy" id="454166"/>
    <lineage>
        <taxon>Bacteria</taxon>
        <taxon>Pseudomonadati</taxon>
        <taxon>Pseudomonadota</taxon>
        <taxon>Gammaproteobacteria</taxon>
        <taxon>Enterobacterales</taxon>
        <taxon>Enterobacteriaceae</taxon>
        <taxon>Salmonella</taxon>
    </lineage>
</organism>
<feature type="signal peptide" evidence="1">
    <location>
        <begin position="1"/>
        <end position="21"/>
    </location>
</feature>
<feature type="chain" id="PRO_1000100502" description="Outer-membrane lipoprotein LolB">
    <location>
        <begin position="22"/>
        <end position="207"/>
    </location>
</feature>
<feature type="lipid moiety-binding region" description="N-palmitoyl cysteine" evidence="1">
    <location>
        <position position="22"/>
    </location>
</feature>
<feature type="lipid moiety-binding region" description="S-diacylglycerol cysteine" evidence="1">
    <location>
        <position position="22"/>
    </location>
</feature>
<keyword id="KW-0998">Cell outer membrane</keyword>
<keyword id="KW-0143">Chaperone</keyword>
<keyword id="KW-0449">Lipoprotein</keyword>
<keyword id="KW-0472">Membrane</keyword>
<keyword id="KW-0564">Palmitate</keyword>
<keyword id="KW-0653">Protein transport</keyword>
<keyword id="KW-0732">Signal</keyword>
<keyword id="KW-0813">Transport</keyword>
<accession>B5F4H3</accession>
<protein>
    <recommendedName>
        <fullName evidence="1">Outer-membrane lipoprotein LolB</fullName>
    </recommendedName>
</protein>
<gene>
    <name evidence="1" type="primary">lolB</name>
    <name type="ordered locus">SeAg_B1360</name>
</gene>
<evidence type="ECO:0000255" key="1">
    <source>
        <dbReference type="HAMAP-Rule" id="MF_00233"/>
    </source>
</evidence>